<organism>
    <name type="scientific">Xenopus laevis</name>
    <name type="common">African clawed frog</name>
    <dbReference type="NCBI Taxonomy" id="8355"/>
    <lineage>
        <taxon>Eukaryota</taxon>
        <taxon>Metazoa</taxon>
        <taxon>Chordata</taxon>
        <taxon>Craniata</taxon>
        <taxon>Vertebrata</taxon>
        <taxon>Euteleostomi</taxon>
        <taxon>Amphibia</taxon>
        <taxon>Batrachia</taxon>
        <taxon>Anura</taxon>
        <taxon>Pipoidea</taxon>
        <taxon>Pipidae</taxon>
        <taxon>Xenopodinae</taxon>
        <taxon>Xenopus</taxon>
        <taxon>Xenopus</taxon>
    </lineage>
</organism>
<reference key="1">
    <citation type="journal article" date="1986" name="EMBO J.">
        <title>Molecular characterization of a karyophilic, histone-binding protein: cDNA cloning, amino acid sequence and expression of nuclear protein N1/N2 of Xenopus laevis.</title>
        <authorList>
            <person name="Kleinschmidt J.A."/>
            <person name="Dingwall C."/>
            <person name="Maier G."/>
            <person name="Franke W.W."/>
        </authorList>
    </citation>
    <scope>NUCLEOTIDE SEQUENCE [MRNA]</scope>
    <scope>PARTIAL PROTEIN SEQUENCE</scope>
    <source>
        <tissue>Oocyte</tissue>
    </source>
</reference>
<dbReference type="EMBL" id="X04712">
    <property type="protein sequence ID" value="CAA28419.1"/>
    <property type="molecule type" value="mRNA"/>
</dbReference>
<dbReference type="PIR" id="A25680">
    <property type="entry name" value="A25680"/>
</dbReference>
<dbReference type="RefSeq" id="NP_001081537.1">
    <property type="nucleotide sequence ID" value="NM_001088068.1"/>
</dbReference>
<dbReference type="PDB" id="1PJN">
    <property type="method" value="X-ray"/>
    <property type="resolution" value="2.50 A"/>
    <property type="chains" value="A=532-552"/>
</dbReference>
<dbReference type="PDBsum" id="1PJN"/>
<dbReference type="SMR" id="P06180"/>
<dbReference type="DNASU" id="397901"/>
<dbReference type="GeneID" id="397901"/>
<dbReference type="KEGG" id="xla:397901"/>
<dbReference type="AGR" id="Xenbase:XB-GENE-980259"/>
<dbReference type="CTD" id="397901"/>
<dbReference type="Xenbase" id="XB-GENE-980259">
    <property type="gene designation" value="nasp.S"/>
</dbReference>
<dbReference type="OrthoDB" id="5587616at2759"/>
<dbReference type="Proteomes" id="UP000186698">
    <property type="component" value="Chromosome 4S"/>
</dbReference>
<dbReference type="Bgee" id="397901">
    <property type="expression patterns" value="Expressed in egg cell and 19 other cell types or tissues"/>
</dbReference>
<dbReference type="GO" id="GO:0005654">
    <property type="term" value="C:nucleoplasm"/>
    <property type="evidence" value="ECO:0000318"/>
    <property type="project" value="GO_Central"/>
</dbReference>
<dbReference type="GO" id="GO:0042393">
    <property type="term" value="F:histone binding"/>
    <property type="evidence" value="ECO:0000318"/>
    <property type="project" value="GO_Central"/>
</dbReference>
<dbReference type="GO" id="GO:0061676">
    <property type="term" value="F:importin-alpha family protein binding"/>
    <property type="evidence" value="ECO:0000353"/>
    <property type="project" value="CAFA"/>
</dbReference>
<dbReference type="GO" id="GO:0034080">
    <property type="term" value="P:CENP-A containing chromatin assembly"/>
    <property type="evidence" value="ECO:0000318"/>
    <property type="project" value="GO_Central"/>
</dbReference>
<dbReference type="GO" id="GO:0006335">
    <property type="term" value="P:DNA replication-dependent chromatin assembly"/>
    <property type="evidence" value="ECO:0000318"/>
    <property type="project" value="GO_Central"/>
</dbReference>
<dbReference type="FunFam" id="1.25.40.10:FF:002230">
    <property type="entry name" value="Nuclear autoantigenic sperm protein (histone-binding)"/>
    <property type="match status" value="1"/>
</dbReference>
<dbReference type="Gene3D" id="1.25.40.10">
    <property type="entry name" value="Tetratricopeptide repeat domain"/>
    <property type="match status" value="1"/>
</dbReference>
<dbReference type="IDEAL" id="IID50002"/>
<dbReference type="InterPro" id="IPR051730">
    <property type="entry name" value="NASP-like"/>
</dbReference>
<dbReference type="InterPro" id="IPR019544">
    <property type="entry name" value="Tetratricopeptide_SHNi-TPR_dom"/>
</dbReference>
<dbReference type="InterPro" id="IPR011990">
    <property type="entry name" value="TPR-like_helical_dom_sf"/>
</dbReference>
<dbReference type="InterPro" id="IPR019734">
    <property type="entry name" value="TPR_rpt"/>
</dbReference>
<dbReference type="PANTHER" id="PTHR15081:SF1">
    <property type="entry name" value="NUCLEAR AUTOANTIGENIC SPERM PROTEIN"/>
    <property type="match status" value="1"/>
</dbReference>
<dbReference type="PANTHER" id="PTHR15081">
    <property type="entry name" value="NUCLEAR AUTOANTIGENIC SPERM PROTEIN NASP -RELATED"/>
    <property type="match status" value="1"/>
</dbReference>
<dbReference type="Pfam" id="PF10516">
    <property type="entry name" value="SHNi-TPR"/>
    <property type="match status" value="1"/>
</dbReference>
<dbReference type="Pfam" id="PF13181">
    <property type="entry name" value="TPR_8"/>
    <property type="match status" value="1"/>
</dbReference>
<dbReference type="SMART" id="SM00028">
    <property type="entry name" value="TPR"/>
    <property type="match status" value="3"/>
</dbReference>
<dbReference type="SUPFAM" id="SSF48452">
    <property type="entry name" value="TPR-like"/>
    <property type="match status" value="1"/>
</dbReference>
<dbReference type="PROSITE" id="PS50005">
    <property type="entry name" value="TPR"/>
    <property type="match status" value="3"/>
</dbReference>
<dbReference type="PROSITE" id="PS50293">
    <property type="entry name" value="TPR_REGION"/>
    <property type="match status" value="1"/>
</dbReference>
<sequence length="590" mass="65029">MAEETAALSTEKTEDTSTAPSTSAEKADGIDIDTEAKRLMGAGQKHLVMKDVRSAVNLFQEASSLLAKQYGETADECAEAFYSYGMSLLELARLENGVLGNALEGMPEDDEEEAEKEEDPNIPSADNLDEKEREQLREQVYDAMAEDQRAPDDTSESEAKGKPEGDSKDKEADEKMKNGQKETEKVTDDLKIDSASRDVPMDKSGKGEPPESKDAETLVEQKESKPETLKEKSIETKEKDLSKEKTDAKETANQSPDSTEVAEEKMDSEASESKESTSIPPTENEANKPDDPEKMEEEEEGEDSEENEDGTEENEGTEEKETEEEDVGNLQLAWEMLDLCKTIFKRQQSKEAQLKAAQAHQKLGEVCIESENYSQAVEDFLACLNIQKEHLEEHDRLLAETHYHLGLAYQYSSKHEEAISHFTQSIGVIEKRMDVLTKQLEASVGELVDEVKKEMDELKDLLPDIKEKIEDSKEAQKNATVTEKALKETLVGGSSGFSKENGSTSSSSAVEKSGDSTVPVTNCVSDISHLVRKKRKTEEESPLKDKDAKKSKQEPVANGAGNGDAVVPTNEEAEKAEEASMETATVESTA</sequence>
<feature type="initiator methionine" description="Removed">
    <location>
        <position position="1"/>
    </location>
</feature>
<feature type="chain" id="PRO_0000083971" description="Histone-binding protein N1/N2">
    <location>
        <begin position="2"/>
        <end position="590"/>
    </location>
</feature>
<feature type="repeat" description="TPR 1">
    <location>
        <begin position="36"/>
        <end position="69"/>
    </location>
</feature>
<feature type="repeat" description="TPR 2">
    <location>
        <begin position="357"/>
        <end position="390"/>
    </location>
</feature>
<feature type="repeat" description="TPR 3">
    <location>
        <begin position="399"/>
        <end position="432"/>
    </location>
</feature>
<feature type="region of interest" description="Disordered" evidence="2">
    <location>
        <begin position="1"/>
        <end position="30"/>
    </location>
</feature>
<feature type="region of interest" description="Disordered" evidence="2">
    <location>
        <begin position="102"/>
        <end position="328"/>
    </location>
</feature>
<feature type="region of interest" description="Disordered" evidence="2">
    <location>
        <begin position="492"/>
        <end position="590"/>
    </location>
</feature>
<feature type="short sequence motif" description="Nuclear localization signal" evidence="1">
    <location>
        <begin position="531"/>
        <end position="537"/>
    </location>
</feature>
<feature type="compositionally biased region" description="Acidic residues" evidence="2">
    <location>
        <begin position="106"/>
        <end position="120"/>
    </location>
</feature>
<feature type="compositionally biased region" description="Basic and acidic residues" evidence="2">
    <location>
        <begin position="128"/>
        <end position="250"/>
    </location>
</feature>
<feature type="compositionally biased region" description="Basic and acidic residues" evidence="2">
    <location>
        <begin position="262"/>
        <end position="275"/>
    </location>
</feature>
<feature type="compositionally biased region" description="Acidic residues" evidence="2">
    <location>
        <begin position="293"/>
        <end position="327"/>
    </location>
</feature>
<feature type="compositionally biased region" description="Polar residues" evidence="2">
    <location>
        <begin position="496"/>
        <end position="525"/>
    </location>
</feature>
<feature type="compositionally biased region" description="Basic and acidic residues" evidence="2">
    <location>
        <begin position="536"/>
        <end position="553"/>
    </location>
</feature>
<keyword id="KW-0002">3D-structure</keyword>
<keyword id="KW-0903">Direct protein sequencing</keyword>
<keyword id="KW-0539">Nucleus</keyword>
<keyword id="KW-1185">Reference proteome</keyword>
<keyword id="KW-0677">Repeat</keyword>
<keyword id="KW-0802">TPR repeat</keyword>
<name>HIBN_XENLA</name>
<comment type="function">
    <text>This protein is involved in nucleosome assembly. It is bound to H3 and H4 in the absence of DNA, but released from H3 and H4 in the presence of DNA.</text>
</comment>
<comment type="subcellular location">
    <subcellularLocation>
        <location>Nucleus</location>
    </subcellularLocation>
</comment>
<comment type="similarity">
    <text evidence="3">Belongs to the NASP family.</text>
</comment>
<evidence type="ECO:0000255" key="1"/>
<evidence type="ECO:0000256" key="2">
    <source>
        <dbReference type="SAM" id="MobiDB-lite"/>
    </source>
</evidence>
<evidence type="ECO:0000305" key="3"/>
<accession>P06180</accession>
<protein>
    <recommendedName>
        <fullName>Histone-binding protein N1/N2</fullName>
    </recommendedName>
</protein>
<proteinExistence type="evidence at protein level"/>